<feature type="chain" id="PRO_0000273697" description="Exodeoxyribonuclease 7 large subunit">
    <location>
        <begin position="1"/>
        <end position="445"/>
    </location>
</feature>
<comment type="function">
    <text evidence="1">Bidirectionally degrades single-stranded DNA into large acid-insoluble oligonucleotides, which are then degraded further into small acid-soluble oligonucleotides.</text>
</comment>
<comment type="catalytic activity">
    <reaction evidence="1">
        <text>Exonucleolytic cleavage in either 5'- to 3'- or 3'- to 5'-direction to yield nucleoside 5'-phosphates.</text>
        <dbReference type="EC" id="3.1.11.6"/>
    </reaction>
</comment>
<comment type="subunit">
    <text evidence="1">Heterooligomer composed of large and small subunits.</text>
</comment>
<comment type="subcellular location">
    <subcellularLocation>
        <location evidence="1">Cytoplasm</location>
    </subcellularLocation>
</comment>
<comment type="similarity">
    <text evidence="1">Belongs to the XseA family.</text>
</comment>
<evidence type="ECO:0000255" key="1">
    <source>
        <dbReference type="HAMAP-Rule" id="MF_00378"/>
    </source>
</evidence>
<name>EX7L_STAA3</name>
<sequence length="445" mass="50894">MSDYLSVSALTKYIKYKFDQDPHLQSVLIKGELSNFKKHSSGHLYFNVKDKESVISAMMFKGSASKLNFEPKEGDEVLLEARVSVFERRGNYQIYVNKMQLDGIGNLYQKLEALKKKLTEEGCFDKANKKSIPKFPKKIAVLTASTGAAIRDIHSTINSRFPLAEQIQISTLVQGEKAKDDIIEKIEYADSLGVDTIIVGRGGGSIEDLWNFNEEAVVRAIYNCKTPIISAVGHETDFTLSDFAADIRAATPTQAAVIATPDQYELLQQIQQYQFTLTRFIKKHLEQQRKHVEHLSSYYKFKQPTLLYDQQIQRRDDLEKRLKQQIQATFEQQRHRLMLLQQRYNLKALLSSVNQEQQNNLQLTNQLVKLLNSKILSYKNDLKNKVENLNNLSPTNTMLRGYAIVNKKDEVITSTKDLTENDQLTLTMKDGLVDAKVTKVRCNND</sequence>
<dbReference type="EC" id="3.1.11.6" evidence="1"/>
<dbReference type="EMBL" id="CP000255">
    <property type="protein sequence ID" value="ABD21129.1"/>
    <property type="molecule type" value="Genomic_DNA"/>
</dbReference>
<dbReference type="RefSeq" id="WP_001286928.1">
    <property type="nucleotide sequence ID" value="NZ_CP027476.1"/>
</dbReference>
<dbReference type="SMR" id="Q2FGL0"/>
<dbReference type="KEGG" id="saa:SAUSA300_1472"/>
<dbReference type="HOGENOM" id="CLU_023625_3_1_9"/>
<dbReference type="OMA" id="WPAVRFE"/>
<dbReference type="Proteomes" id="UP000001939">
    <property type="component" value="Chromosome"/>
</dbReference>
<dbReference type="GO" id="GO:0005737">
    <property type="term" value="C:cytoplasm"/>
    <property type="evidence" value="ECO:0007669"/>
    <property type="project" value="UniProtKB-SubCell"/>
</dbReference>
<dbReference type="GO" id="GO:0009318">
    <property type="term" value="C:exodeoxyribonuclease VII complex"/>
    <property type="evidence" value="ECO:0007669"/>
    <property type="project" value="InterPro"/>
</dbReference>
<dbReference type="GO" id="GO:0008855">
    <property type="term" value="F:exodeoxyribonuclease VII activity"/>
    <property type="evidence" value="ECO:0007669"/>
    <property type="project" value="UniProtKB-UniRule"/>
</dbReference>
<dbReference type="GO" id="GO:0003676">
    <property type="term" value="F:nucleic acid binding"/>
    <property type="evidence" value="ECO:0007669"/>
    <property type="project" value="InterPro"/>
</dbReference>
<dbReference type="GO" id="GO:0006308">
    <property type="term" value="P:DNA catabolic process"/>
    <property type="evidence" value="ECO:0007669"/>
    <property type="project" value="UniProtKB-UniRule"/>
</dbReference>
<dbReference type="CDD" id="cd04489">
    <property type="entry name" value="ExoVII_LU_OBF"/>
    <property type="match status" value="1"/>
</dbReference>
<dbReference type="HAMAP" id="MF_00378">
    <property type="entry name" value="Exonuc_7_L"/>
    <property type="match status" value="1"/>
</dbReference>
<dbReference type="InterPro" id="IPR003753">
    <property type="entry name" value="Exonuc_VII_L"/>
</dbReference>
<dbReference type="InterPro" id="IPR020579">
    <property type="entry name" value="Exonuc_VII_lsu_C"/>
</dbReference>
<dbReference type="InterPro" id="IPR025824">
    <property type="entry name" value="OB-fold_nuc-bd_dom"/>
</dbReference>
<dbReference type="NCBIfam" id="TIGR00237">
    <property type="entry name" value="xseA"/>
    <property type="match status" value="1"/>
</dbReference>
<dbReference type="PANTHER" id="PTHR30008">
    <property type="entry name" value="EXODEOXYRIBONUCLEASE 7 LARGE SUBUNIT"/>
    <property type="match status" value="1"/>
</dbReference>
<dbReference type="PANTHER" id="PTHR30008:SF0">
    <property type="entry name" value="EXODEOXYRIBONUCLEASE 7 LARGE SUBUNIT"/>
    <property type="match status" value="1"/>
</dbReference>
<dbReference type="Pfam" id="PF02601">
    <property type="entry name" value="Exonuc_VII_L"/>
    <property type="match status" value="1"/>
</dbReference>
<dbReference type="Pfam" id="PF13742">
    <property type="entry name" value="tRNA_anti_2"/>
    <property type="match status" value="1"/>
</dbReference>
<protein>
    <recommendedName>
        <fullName evidence="1">Exodeoxyribonuclease 7 large subunit</fullName>
        <ecNumber evidence="1">3.1.11.6</ecNumber>
    </recommendedName>
    <alternativeName>
        <fullName evidence="1">Exodeoxyribonuclease VII large subunit</fullName>
        <shortName evidence="1">Exonuclease VII large subunit</shortName>
    </alternativeName>
</protein>
<keyword id="KW-0963">Cytoplasm</keyword>
<keyword id="KW-0269">Exonuclease</keyword>
<keyword id="KW-0378">Hydrolase</keyword>
<keyword id="KW-0540">Nuclease</keyword>
<organism>
    <name type="scientific">Staphylococcus aureus (strain USA300)</name>
    <dbReference type="NCBI Taxonomy" id="367830"/>
    <lineage>
        <taxon>Bacteria</taxon>
        <taxon>Bacillati</taxon>
        <taxon>Bacillota</taxon>
        <taxon>Bacilli</taxon>
        <taxon>Bacillales</taxon>
        <taxon>Staphylococcaceae</taxon>
        <taxon>Staphylococcus</taxon>
    </lineage>
</organism>
<reference key="1">
    <citation type="journal article" date="2006" name="Lancet">
        <title>Complete genome sequence of USA300, an epidemic clone of community-acquired meticillin-resistant Staphylococcus aureus.</title>
        <authorList>
            <person name="Diep B.A."/>
            <person name="Gill S.R."/>
            <person name="Chang R.F."/>
            <person name="Phan T.H."/>
            <person name="Chen J.H."/>
            <person name="Davidson M.G."/>
            <person name="Lin F."/>
            <person name="Lin J."/>
            <person name="Carleton H.A."/>
            <person name="Mongodin E.F."/>
            <person name="Sensabaugh G.F."/>
            <person name="Perdreau-Remington F."/>
        </authorList>
    </citation>
    <scope>NUCLEOTIDE SEQUENCE [LARGE SCALE GENOMIC DNA]</scope>
    <source>
        <strain>USA300</strain>
    </source>
</reference>
<accession>Q2FGL0</accession>
<proteinExistence type="inferred from homology"/>
<gene>
    <name evidence="1" type="primary">xseA</name>
    <name type="ordered locus">SAUSA300_1472</name>
</gene>